<proteinExistence type="inferred from homology"/>
<organism>
    <name type="scientific">Citrobacter koseri (strain ATCC BAA-895 / CDC 4225-83 / SGSC4696)</name>
    <dbReference type="NCBI Taxonomy" id="290338"/>
    <lineage>
        <taxon>Bacteria</taxon>
        <taxon>Pseudomonadati</taxon>
        <taxon>Pseudomonadota</taxon>
        <taxon>Gammaproteobacteria</taxon>
        <taxon>Enterobacterales</taxon>
        <taxon>Enterobacteriaceae</taxon>
        <taxon>Citrobacter</taxon>
    </lineage>
</organism>
<accession>A8AMG4</accession>
<reference key="1">
    <citation type="submission" date="2007-08" db="EMBL/GenBank/DDBJ databases">
        <authorList>
            <consortium name="The Citrobacter koseri Genome Sequencing Project"/>
            <person name="McClelland M."/>
            <person name="Sanderson E.K."/>
            <person name="Porwollik S."/>
            <person name="Spieth J."/>
            <person name="Clifton W.S."/>
            <person name="Latreille P."/>
            <person name="Courtney L."/>
            <person name="Wang C."/>
            <person name="Pepin K."/>
            <person name="Bhonagiri V."/>
            <person name="Nash W."/>
            <person name="Johnson M."/>
            <person name="Thiruvilangam P."/>
            <person name="Wilson R."/>
        </authorList>
    </citation>
    <scope>NUCLEOTIDE SEQUENCE [LARGE SCALE GENOMIC DNA]</scope>
    <source>
        <strain>ATCC BAA-895 / CDC 4225-83 / SGSC4696</strain>
    </source>
</reference>
<keyword id="KW-0119">Carbohydrate metabolism</keyword>
<keyword id="KW-0963">Cytoplasm</keyword>
<keyword id="KW-0378">Hydrolase</keyword>
<keyword id="KW-0460">Magnesium</keyword>
<keyword id="KW-0479">Metal-binding</keyword>
<keyword id="KW-1185">Reference proteome</keyword>
<name>F16PA_CITK8</name>
<sequence>MKTLGEFIVEKQHEFSHATGELTALLSAIKLGAKIIHRDINKAGLVDILGASGAENVQGEVQQKLDLFANEKLKAALKARDIVAGIASEEEDEIVVFEGCEHAKYVVLMDPLDGSSNIDVNVSVGTIFSIYRRVTPVGTPVTEEDFLQPGNKQVAAGYVVYGSSTMLVYTTGCGVHAFTYDPSLGVFCLCQERMRFPEKGNTYSINEGNYIKFPNGVKKYIKFCQEEDKSTNRPYTSRYIGSLVADFHRNLLKGGIYLYPSTASHPEGKLRLLYECNPMAFLAEQAGGKASDGKERILDITPESLHQRRPFFVGTDHMVEDVERFIREFPDA</sequence>
<evidence type="ECO:0000255" key="1">
    <source>
        <dbReference type="HAMAP-Rule" id="MF_01855"/>
    </source>
</evidence>
<evidence type="ECO:0000305" key="2"/>
<protein>
    <recommendedName>
        <fullName evidence="1">Fructose-1,6-bisphosphatase class 1</fullName>
        <shortName evidence="1">FBPase class 1</shortName>
        <ecNumber evidence="1">3.1.3.11</ecNumber>
    </recommendedName>
    <alternativeName>
        <fullName evidence="1">D-fructose-1,6-bisphosphate 1-phosphohydrolase class 1</fullName>
    </alternativeName>
</protein>
<dbReference type="EC" id="3.1.3.11" evidence="1"/>
<dbReference type="EMBL" id="CP000822">
    <property type="protein sequence ID" value="ABV14677.1"/>
    <property type="status" value="ALT_INIT"/>
    <property type="molecule type" value="Genomic_DNA"/>
</dbReference>
<dbReference type="RefSeq" id="WP_024130778.1">
    <property type="nucleotide sequence ID" value="NC_009792.1"/>
</dbReference>
<dbReference type="SMR" id="A8AMG4"/>
<dbReference type="STRING" id="290338.CKO_03598"/>
<dbReference type="GeneID" id="45137314"/>
<dbReference type="KEGG" id="cko:CKO_03598"/>
<dbReference type="HOGENOM" id="CLU_039977_2_2_6"/>
<dbReference type="OrthoDB" id="9806756at2"/>
<dbReference type="UniPathway" id="UPA00138"/>
<dbReference type="Proteomes" id="UP000008148">
    <property type="component" value="Chromosome"/>
</dbReference>
<dbReference type="GO" id="GO:0005829">
    <property type="term" value="C:cytosol"/>
    <property type="evidence" value="ECO:0007669"/>
    <property type="project" value="TreeGrafter"/>
</dbReference>
<dbReference type="GO" id="GO:0042132">
    <property type="term" value="F:fructose 1,6-bisphosphate 1-phosphatase activity"/>
    <property type="evidence" value="ECO:0007669"/>
    <property type="project" value="UniProtKB-UniRule"/>
</dbReference>
<dbReference type="GO" id="GO:0000287">
    <property type="term" value="F:magnesium ion binding"/>
    <property type="evidence" value="ECO:0007669"/>
    <property type="project" value="UniProtKB-UniRule"/>
</dbReference>
<dbReference type="GO" id="GO:0030388">
    <property type="term" value="P:fructose 1,6-bisphosphate metabolic process"/>
    <property type="evidence" value="ECO:0007669"/>
    <property type="project" value="TreeGrafter"/>
</dbReference>
<dbReference type="GO" id="GO:0006002">
    <property type="term" value="P:fructose 6-phosphate metabolic process"/>
    <property type="evidence" value="ECO:0007669"/>
    <property type="project" value="TreeGrafter"/>
</dbReference>
<dbReference type="GO" id="GO:0006000">
    <property type="term" value="P:fructose metabolic process"/>
    <property type="evidence" value="ECO:0007669"/>
    <property type="project" value="TreeGrafter"/>
</dbReference>
<dbReference type="GO" id="GO:0006094">
    <property type="term" value="P:gluconeogenesis"/>
    <property type="evidence" value="ECO:0007669"/>
    <property type="project" value="UniProtKB-UniRule"/>
</dbReference>
<dbReference type="GO" id="GO:0005986">
    <property type="term" value="P:sucrose biosynthetic process"/>
    <property type="evidence" value="ECO:0007669"/>
    <property type="project" value="TreeGrafter"/>
</dbReference>
<dbReference type="CDD" id="cd00354">
    <property type="entry name" value="FBPase"/>
    <property type="match status" value="1"/>
</dbReference>
<dbReference type="FunFam" id="3.30.540.10:FF:000002">
    <property type="entry name" value="Fructose-1,6-bisphosphatase class 1"/>
    <property type="match status" value="1"/>
</dbReference>
<dbReference type="FunFam" id="3.40.190.80:FF:000001">
    <property type="entry name" value="Fructose-1,6-bisphosphatase class 1"/>
    <property type="match status" value="1"/>
</dbReference>
<dbReference type="Gene3D" id="3.40.190.80">
    <property type="match status" value="1"/>
</dbReference>
<dbReference type="Gene3D" id="3.30.540.10">
    <property type="entry name" value="Fructose-1,6-Bisphosphatase, subunit A, domain 1"/>
    <property type="match status" value="1"/>
</dbReference>
<dbReference type="HAMAP" id="MF_01855">
    <property type="entry name" value="FBPase_class1"/>
    <property type="match status" value="1"/>
</dbReference>
<dbReference type="InterPro" id="IPR044015">
    <property type="entry name" value="FBPase_C_dom"/>
</dbReference>
<dbReference type="InterPro" id="IPR000146">
    <property type="entry name" value="FBPase_class-1"/>
</dbReference>
<dbReference type="InterPro" id="IPR033391">
    <property type="entry name" value="FBPase_N"/>
</dbReference>
<dbReference type="InterPro" id="IPR028343">
    <property type="entry name" value="FBPtase"/>
</dbReference>
<dbReference type="InterPro" id="IPR020548">
    <property type="entry name" value="Fructose_bisphosphatase_AS"/>
</dbReference>
<dbReference type="NCBIfam" id="NF006778">
    <property type="entry name" value="PRK09293.1-1"/>
    <property type="match status" value="1"/>
</dbReference>
<dbReference type="NCBIfam" id="NF006779">
    <property type="entry name" value="PRK09293.1-3"/>
    <property type="match status" value="1"/>
</dbReference>
<dbReference type="PANTHER" id="PTHR11556">
    <property type="entry name" value="FRUCTOSE-1,6-BISPHOSPHATASE-RELATED"/>
    <property type="match status" value="1"/>
</dbReference>
<dbReference type="PANTHER" id="PTHR11556:SF35">
    <property type="entry name" value="SEDOHEPTULOSE-1,7-BISPHOSPHATASE, CHLOROPLASTIC"/>
    <property type="match status" value="1"/>
</dbReference>
<dbReference type="Pfam" id="PF00316">
    <property type="entry name" value="FBPase"/>
    <property type="match status" value="1"/>
</dbReference>
<dbReference type="Pfam" id="PF18913">
    <property type="entry name" value="FBPase_C"/>
    <property type="match status" value="1"/>
</dbReference>
<dbReference type="PIRSF" id="PIRSF500210">
    <property type="entry name" value="FBPtase"/>
    <property type="match status" value="1"/>
</dbReference>
<dbReference type="PIRSF" id="PIRSF000904">
    <property type="entry name" value="FBPtase_SBPase"/>
    <property type="match status" value="1"/>
</dbReference>
<dbReference type="PRINTS" id="PR00115">
    <property type="entry name" value="F16BPHPHTASE"/>
</dbReference>
<dbReference type="SUPFAM" id="SSF56655">
    <property type="entry name" value="Carbohydrate phosphatase"/>
    <property type="match status" value="1"/>
</dbReference>
<dbReference type="PROSITE" id="PS00124">
    <property type="entry name" value="FBPASE"/>
    <property type="match status" value="1"/>
</dbReference>
<feature type="chain" id="PRO_0000364528" description="Fructose-1,6-bisphosphatase class 1">
    <location>
        <begin position="1"/>
        <end position="332"/>
    </location>
</feature>
<feature type="binding site" evidence="1">
    <location>
        <position position="89"/>
    </location>
    <ligand>
        <name>Mg(2+)</name>
        <dbReference type="ChEBI" id="CHEBI:18420"/>
        <label>1</label>
    </ligand>
</feature>
<feature type="binding site" evidence="1">
    <location>
        <position position="110"/>
    </location>
    <ligand>
        <name>Mg(2+)</name>
        <dbReference type="ChEBI" id="CHEBI:18420"/>
        <label>1</label>
    </ligand>
</feature>
<feature type="binding site" evidence="1">
    <location>
        <position position="110"/>
    </location>
    <ligand>
        <name>Mg(2+)</name>
        <dbReference type="ChEBI" id="CHEBI:18420"/>
        <label>2</label>
    </ligand>
</feature>
<feature type="binding site" evidence="1">
    <location>
        <position position="112"/>
    </location>
    <ligand>
        <name>Mg(2+)</name>
        <dbReference type="ChEBI" id="CHEBI:18420"/>
        <label>1</label>
    </ligand>
</feature>
<feature type="binding site" evidence="1">
    <location>
        <begin position="113"/>
        <end position="116"/>
    </location>
    <ligand>
        <name>substrate</name>
    </ligand>
</feature>
<feature type="binding site" evidence="1">
    <location>
        <position position="113"/>
    </location>
    <ligand>
        <name>Mg(2+)</name>
        <dbReference type="ChEBI" id="CHEBI:18420"/>
        <label>2</label>
    </ligand>
</feature>
<feature type="binding site" evidence="1">
    <location>
        <position position="206"/>
    </location>
    <ligand>
        <name>substrate</name>
    </ligand>
</feature>
<feature type="binding site" evidence="1">
    <location>
        <position position="239"/>
    </location>
    <ligand>
        <name>substrate</name>
    </ligand>
</feature>
<feature type="binding site" evidence="1">
    <location>
        <begin position="257"/>
        <end position="259"/>
    </location>
    <ligand>
        <name>substrate</name>
    </ligand>
</feature>
<feature type="binding site" evidence="1">
    <location>
        <position position="269"/>
    </location>
    <ligand>
        <name>substrate</name>
    </ligand>
</feature>
<feature type="binding site" evidence="1">
    <location>
        <position position="275"/>
    </location>
    <ligand>
        <name>Mg(2+)</name>
        <dbReference type="ChEBI" id="CHEBI:18420"/>
        <label>2</label>
    </ligand>
</feature>
<gene>
    <name evidence="1" type="primary">fbp</name>
    <name type="ordered locus">CKO_03598</name>
</gene>
<comment type="catalytic activity">
    <reaction evidence="1">
        <text>beta-D-fructose 1,6-bisphosphate + H2O = beta-D-fructose 6-phosphate + phosphate</text>
        <dbReference type="Rhea" id="RHEA:11064"/>
        <dbReference type="ChEBI" id="CHEBI:15377"/>
        <dbReference type="ChEBI" id="CHEBI:32966"/>
        <dbReference type="ChEBI" id="CHEBI:43474"/>
        <dbReference type="ChEBI" id="CHEBI:57634"/>
        <dbReference type="EC" id="3.1.3.11"/>
    </reaction>
</comment>
<comment type="cofactor">
    <cofactor evidence="1">
        <name>Mg(2+)</name>
        <dbReference type="ChEBI" id="CHEBI:18420"/>
    </cofactor>
    <text evidence="1">Binds 2 magnesium ions per subunit.</text>
</comment>
<comment type="pathway">
    <text evidence="1">Carbohydrate biosynthesis; gluconeogenesis.</text>
</comment>
<comment type="subunit">
    <text evidence="1">Homotetramer.</text>
</comment>
<comment type="subcellular location">
    <subcellularLocation>
        <location evidence="1">Cytoplasm</location>
    </subcellularLocation>
</comment>
<comment type="similarity">
    <text evidence="1">Belongs to the FBPase class 1 family.</text>
</comment>
<comment type="sequence caution" evidence="2">
    <conflict type="erroneous initiation">
        <sequence resource="EMBL-CDS" id="ABV14677"/>
    </conflict>
</comment>